<accession>A1VEW8</accession>
<evidence type="ECO:0000255" key="1">
    <source>
        <dbReference type="HAMAP-Rule" id="MF_01218"/>
    </source>
</evidence>
<dbReference type="EC" id="2.4.2.9" evidence="1"/>
<dbReference type="EMBL" id="CP000527">
    <property type="protein sequence ID" value="ABM28984.1"/>
    <property type="molecule type" value="Genomic_DNA"/>
</dbReference>
<dbReference type="RefSeq" id="WP_010938324.1">
    <property type="nucleotide sequence ID" value="NC_008751.1"/>
</dbReference>
<dbReference type="SMR" id="A1VEW8"/>
<dbReference type="KEGG" id="dvl:Dvul_1968"/>
<dbReference type="HOGENOM" id="CLU_067096_2_2_7"/>
<dbReference type="UniPathway" id="UPA00574">
    <property type="reaction ID" value="UER00636"/>
</dbReference>
<dbReference type="Proteomes" id="UP000009173">
    <property type="component" value="Chromosome"/>
</dbReference>
<dbReference type="GO" id="GO:0005525">
    <property type="term" value="F:GTP binding"/>
    <property type="evidence" value="ECO:0007669"/>
    <property type="project" value="UniProtKB-KW"/>
</dbReference>
<dbReference type="GO" id="GO:0000287">
    <property type="term" value="F:magnesium ion binding"/>
    <property type="evidence" value="ECO:0007669"/>
    <property type="project" value="UniProtKB-UniRule"/>
</dbReference>
<dbReference type="GO" id="GO:0004845">
    <property type="term" value="F:uracil phosphoribosyltransferase activity"/>
    <property type="evidence" value="ECO:0007669"/>
    <property type="project" value="UniProtKB-UniRule"/>
</dbReference>
<dbReference type="GO" id="GO:0044206">
    <property type="term" value="P:UMP salvage"/>
    <property type="evidence" value="ECO:0007669"/>
    <property type="project" value="UniProtKB-UniRule"/>
</dbReference>
<dbReference type="GO" id="GO:0006223">
    <property type="term" value="P:uracil salvage"/>
    <property type="evidence" value="ECO:0007669"/>
    <property type="project" value="InterPro"/>
</dbReference>
<dbReference type="CDD" id="cd06223">
    <property type="entry name" value="PRTases_typeI"/>
    <property type="match status" value="1"/>
</dbReference>
<dbReference type="FunFam" id="3.40.50.2020:FF:000003">
    <property type="entry name" value="Uracil phosphoribosyltransferase"/>
    <property type="match status" value="1"/>
</dbReference>
<dbReference type="Gene3D" id="3.40.50.2020">
    <property type="match status" value="1"/>
</dbReference>
<dbReference type="HAMAP" id="MF_01218_B">
    <property type="entry name" value="Upp_B"/>
    <property type="match status" value="1"/>
</dbReference>
<dbReference type="InterPro" id="IPR000836">
    <property type="entry name" value="PRibTrfase_dom"/>
</dbReference>
<dbReference type="InterPro" id="IPR029057">
    <property type="entry name" value="PRTase-like"/>
</dbReference>
<dbReference type="InterPro" id="IPR034332">
    <property type="entry name" value="Upp_B"/>
</dbReference>
<dbReference type="InterPro" id="IPR050054">
    <property type="entry name" value="UPRTase/APRTase"/>
</dbReference>
<dbReference type="InterPro" id="IPR005765">
    <property type="entry name" value="Ura_phspho_trans"/>
</dbReference>
<dbReference type="NCBIfam" id="NF001097">
    <property type="entry name" value="PRK00129.1"/>
    <property type="match status" value="1"/>
</dbReference>
<dbReference type="NCBIfam" id="TIGR01091">
    <property type="entry name" value="upp"/>
    <property type="match status" value="1"/>
</dbReference>
<dbReference type="PANTHER" id="PTHR32315">
    <property type="entry name" value="ADENINE PHOSPHORIBOSYLTRANSFERASE"/>
    <property type="match status" value="1"/>
</dbReference>
<dbReference type="PANTHER" id="PTHR32315:SF4">
    <property type="entry name" value="URACIL PHOSPHORIBOSYLTRANSFERASE, CHLOROPLASTIC"/>
    <property type="match status" value="1"/>
</dbReference>
<dbReference type="Pfam" id="PF14681">
    <property type="entry name" value="UPRTase"/>
    <property type="match status" value="1"/>
</dbReference>
<dbReference type="SUPFAM" id="SSF53271">
    <property type="entry name" value="PRTase-like"/>
    <property type="match status" value="1"/>
</dbReference>
<organism>
    <name type="scientific">Nitratidesulfovibrio vulgaris (strain DP4)</name>
    <name type="common">Desulfovibrio vulgaris</name>
    <dbReference type="NCBI Taxonomy" id="391774"/>
    <lineage>
        <taxon>Bacteria</taxon>
        <taxon>Pseudomonadati</taxon>
        <taxon>Thermodesulfobacteriota</taxon>
        <taxon>Desulfovibrionia</taxon>
        <taxon>Desulfovibrionales</taxon>
        <taxon>Desulfovibrionaceae</taxon>
        <taxon>Nitratidesulfovibrio</taxon>
    </lineage>
</organism>
<proteinExistence type="inferred from homology"/>
<protein>
    <recommendedName>
        <fullName evidence="1">Uracil phosphoribosyltransferase</fullName>
        <ecNumber evidence="1">2.4.2.9</ecNumber>
    </recommendedName>
    <alternativeName>
        <fullName evidence="1">UMP pyrophosphorylase</fullName>
    </alternativeName>
    <alternativeName>
        <fullName evidence="1">UPRTase</fullName>
    </alternativeName>
</protein>
<feature type="chain" id="PRO_1000053715" description="Uracil phosphoribosyltransferase">
    <location>
        <begin position="1"/>
        <end position="208"/>
    </location>
</feature>
<feature type="binding site" evidence="1">
    <location>
        <position position="78"/>
    </location>
    <ligand>
        <name>5-phospho-alpha-D-ribose 1-diphosphate</name>
        <dbReference type="ChEBI" id="CHEBI:58017"/>
    </ligand>
</feature>
<feature type="binding site" evidence="1">
    <location>
        <position position="103"/>
    </location>
    <ligand>
        <name>5-phospho-alpha-D-ribose 1-diphosphate</name>
        <dbReference type="ChEBI" id="CHEBI:58017"/>
    </ligand>
</feature>
<feature type="binding site" evidence="1">
    <location>
        <begin position="130"/>
        <end position="138"/>
    </location>
    <ligand>
        <name>5-phospho-alpha-D-ribose 1-diphosphate</name>
        <dbReference type="ChEBI" id="CHEBI:58017"/>
    </ligand>
</feature>
<feature type="binding site" evidence="1">
    <location>
        <position position="193"/>
    </location>
    <ligand>
        <name>uracil</name>
        <dbReference type="ChEBI" id="CHEBI:17568"/>
    </ligand>
</feature>
<feature type="binding site" evidence="1">
    <location>
        <begin position="198"/>
        <end position="200"/>
    </location>
    <ligand>
        <name>uracil</name>
        <dbReference type="ChEBI" id="CHEBI:17568"/>
    </ligand>
</feature>
<feature type="binding site" evidence="1">
    <location>
        <position position="199"/>
    </location>
    <ligand>
        <name>5-phospho-alpha-D-ribose 1-diphosphate</name>
        <dbReference type="ChEBI" id="CHEBI:58017"/>
    </ligand>
</feature>
<name>UPP_NITV4</name>
<sequence>MAVYVVDHPLVKHKLGRLRQHDVPVSEFRAIANELCRLLAYEATKDLETEKVSVQGWAGPVEVDQIKGKKITAVPILRAGLGMLDGFLDMIPGAKVSVVGMFRNEETLEPVQYYTKLAKNIDERMAVILDPMLATGGTLDATIDLLKNAGCPQIKGLFLVAAPEGLKRIVDKHPDVDIYVAAVDERLNEHGYILPGLGDAGDKIFGTK</sequence>
<keyword id="KW-0021">Allosteric enzyme</keyword>
<keyword id="KW-0328">Glycosyltransferase</keyword>
<keyword id="KW-0342">GTP-binding</keyword>
<keyword id="KW-0460">Magnesium</keyword>
<keyword id="KW-0547">Nucleotide-binding</keyword>
<keyword id="KW-0808">Transferase</keyword>
<comment type="function">
    <text evidence="1">Catalyzes the conversion of uracil and 5-phospho-alpha-D-ribose 1-diphosphate (PRPP) to UMP and diphosphate.</text>
</comment>
<comment type="catalytic activity">
    <reaction evidence="1">
        <text>UMP + diphosphate = 5-phospho-alpha-D-ribose 1-diphosphate + uracil</text>
        <dbReference type="Rhea" id="RHEA:13017"/>
        <dbReference type="ChEBI" id="CHEBI:17568"/>
        <dbReference type="ChEBI" id="CHEBI:33019"/>
        <dbReference type="ChEBI" id="CHEBI:57865"/>
        <dbReference type="ChEBI" id="CHEBI:58017"/>
        <dbReference type="EC" id="2.4.2.9"/>
    </reaction>
</comment>
<comment type="cofactor">
    <cofactor evidence="1">
        <name>Mg(2+)</name>
        <dbReference type="ChEBI" id="CHEBI:18420"/>
    </cofactor>
    <text evidence="1">Binds 1 Mg(2+) ion per subunit. The magnesium is bound as Mg-PRPP.</text>
</comment>
<comment type="activity regulation">
    <text evidence="1">Allosterically activated by GTP.</text>
</comment>
<comment type="pathway">
    <text evidence="1">Pyrimidine metabolism; UMP biosynthesis via salvage pathway; UMP from uracil: step 1/1.</text>
</comment>
<comment type="similarity">
    <text evidence="1">Belongs to the UPRTase family.</text>
</comment>
<reference key="1">
    <citation type="journal article" date="2009" name="Environ. Microbiol.">
        <title>Contribution of mobile genetic elements to Desulfovibrio vulgaris genome plasticity.</title>
        <authorList>
            <person name="Walker C.B."/>
            <person name="Stolyar S."/>
            <person name="Chivian D."/>
            <person name="Pinel N."/>
            <person name="Gabster J.A."/>
            <person name="Dehal P.S."/>
            <person name="He Z."/>
            <person name="Yang Z.K."/>
            <person name="Yen H.C."/>
            <person name="Zhou J."/>
            <person name="Wall J.D."/>
            <person name="Hazen T.C."/>
            <person name="Arkin A.P."/>
            <person name="Stahl D.A."/>
        </authorList>
    </citation>
    <scope>NUCLEOTIDE SEQUENCE [LARGE SCALE GENOMIC DNA]</scope>
    <source>
        <strain>DP4</strain>
    </source>
</reference>
<gene>
    <name evidence="1" type="primary">upp</name>
    <name type="ordered locus">Dvul_1968</name>
</gene>